<keyword id="KW-0009">Actin-binding</keyword>
<keyword id="KW-1003">Cell membrane</keyword>
<keyword id="KW-0325">Glycoprotein</keyword>
<keyword id="KW-0336">GPI-anchor</keyword>
<keyword id="KW-0449">Lipoprotein</keyword>
<keyword id="KW-0472">Membrane</keyword>
<keyword id="KW-1185">Reference proteome</keyword>
<keyword id="KW-0732">Signal</keyword>
<proteinExistence type="inferred from homology"/>
<organism>
    <name type="scientific">Dictyostelium discoideum</name>
    <name type="common">Social amoeba</name>
    <dbReference type="NCBI Taxonomy" id="44689"/>
    <lineage>
        <taxon>Eukaryota</taxon>
        <taxon>Amoebozoa</taxon>
        <taxon>Evosea</taxon>
        <taxon>Eumycetozoa</taxon>
        <taxon>Dictyostelia</taxon>
        <taxon>Dictyosteliales</taxon>
        <taxon>Dictyosteliaceae</taxon>
        <taxon>Dictyostelium</taxon>
    </lineage>
</organism>
<protein>
    <recommendedName>
        <fullName>Ponticulin-like protein J</fullName>
    </recommendedName>
</protein>
<evidence type="ECO:0000255" key="1"/>
<evidence type="ECO:0000256" key="2">
    <source>
        <dbReference type="SAM" id="MobiDB-lite"/>
    </source>
</evidence>
<evidence type="ECO:0000269" key="3">
    <source>
    </source>
</evidence>
<evidence type="ECO:0000305" key="4"/>
<comment type="function">
    <text evidence="3">Binds F-actin and nucleates actin assembly.</text>
</comment>
<comment type="subcellular location">
    <subcellularLocation>
        <location evidence="4">Cell membrane</location>
        <topology evidence="4">Lipid-anchor</topology>
        <topology evidence="4">GPI-anchor</topology>
    </subcellularLocation>
</comment>
<comment type="PTM">
    <text evidence="4">The GPI-like-anchor contains a phosphoceramide group, rather than a phosphatidyl group.</text>
</comment>
<comment type="similarity">
    <text evidence="4">Belongs to the ponticulin family.</text>
</comment>
<comment type="caution">
    <text evidence="4">The Dictyosteliida are known to produce a glycosylsphingolipidinositol anchor (GPI-like-anchor). It has not been established whether Dictyosteliida make a glycosylphosphatidylinositol anchor (GPI-anchor) also, and whether their GPI-like-anchor modifications can be interconverted with GPI-anchor modifications in a resculpting process. It has not been established that the GPI-like-anchor modification in Dictyosteliida utilizes the same sequence motif.</text>
</comment>
<sequence length="234" mass="25152">MRLLNNLILMVVLFVAVSNATTKFTFNTFSVRNTEDQTCFTKTAKTTDDSTKVDINKCTVGCGGSMKIRKGTKSQQYQFELFSSTDCTGETTSKVLFVCPNPSIDAISIKSTSNTIKCGTLPPDSEIKEDDTATAVVNDENNNETKNEPKTKTKSTPKSPSTPKTNNSNEDSDLTTSSSDSSSSTKSSPKSKSSTEVNENKPKSDNETAEGNNASSNIATFSLVIISLLVASLF</sequence>
<name>PONJ_DICDI</name>
<reference key="1">
    <citation type="journal article" date="2005" name="Nature">
        <title>The genome of the social amoeba Dictyostelium discoideum.</title>
        <authorList>
            <person name="Eichinger L."/>
            <person name="Pachebat J.A."/>
            <person name="Gloeckner G."/>
            <person name="Rajandream M.A."/>
            <person name="Sucgang R."/>
            <person name="Berriman M."/>
            <person name="Song J."/>
            <person name="Olsen R."/>
            <person name="Szafranski K."/>
            <person name="Xu Q."/>
            <person name="Tunggal B."/>
            <person name="Kummerfeld S."/>
            <person name="Madera M."/>
            <person name="Konfortov B.A."/>
            <person name="Rivero F."/>
            <person name="Bankier A.T."/>
            <person name="Lehmann R."/>
            <person name="Hamlin N."/>
            <person name="Davies R."/>
            <person name="Gaudet P."/>
            <person name="Fey P."/>
            <person name="Pilcher K."/>
            <person name="Chen G."/>
            <person name="Saunders D."/>
            <person name="Sodergren E.J."/>
            <person name="Davis P."/>
            <person name="Kerhornou A."/>
            <person name="Nie X."/>
            <person name="Hall N."/>
            <person name="Anjard C."/>
            <person name="Hemphill L."/>
            <person name="Bason N."/>
            <person name="Farbrother P."/>
            <person name="Desany B."/>
            <person name="Just E."/>
            <person name="Morio T."/>
            <person name="Rost R."/>
            <person name="Churcher C.M."/>
            <person name="Cooper J."/>
            <person name="Haydock S."/>
            <person name="van Driessche N."/>
            <person name="Cronin A."/>
            <person name="Goodhead I."/>
            <person name="Muzny D.M."/>
            <person name="Mourier T."/>
            <person name="Pain A."/>
            <person name="Lu M."/>
            <person name="Harper D."/>
            <person name="Lindsay R."/>
            <person name="Hauser H."/>
            <person name="James K.D."/>
            <person name="Quiles M."/>
            <person name="Madan Babu M."/>
            <person name="Saito T."/>
            <person name="Buchrieser C."/>
            <person name="Wardroper A."/>
            <person name="Felder M."/>
            <person name="Thangavelu M."/>
            <person name="Johnson D."/>
            <person name="Knights A."/>
            <person name="Loulseged H."/>
            <person name="Mungall K.L."/>
            <person name="Oliver K."/>
            <person name="Price C."/>
            <person name="Quail M.A."/>
            <person name="Urushihara H."/>
            <person name="Hernandez J."/>
            <person name="Rabbinowitsch E."/>
            <person name="Steffen D."/>
            <person name="Sanders M."/>
            <person name="Ma J."/>
            <person name="Kohara Y."/>
            <person name="Sharp S."/>
            <person name="Simmonds M.N."/>
            <person name="Spiegler S."/>
            <person name="Tivey A."/>
            <person name="Sugano S."/>
            <person name="White B."/>
            <person name="Walker D."/>
            <person name="Woodward J.R."/>
            <person name="Winckler T."/>
            <person name="Tanaka Y."/>
            <person name="Shaulsky G."/>
            <person name="Schleicher M."/>
            <person name="Weinstock G.M."/>
            <person name="Rosenthal A."/>
            <person name="Cox E.C."/>
            <person name="Chisholm R.L."/>
            <person name="Gibbs R.A."/>
            <person name="Loomis W.F."/>
            <person name="Platzer M."/>
            <person name="Kay R.R."/>
            <person name="Williams J.G."/>
            <person name="Dear P.H."/>
            <person name="Noegel A.A."/>
            <person name="Barrell B.G."/>
            <person name="Kuspa A."/>
        </authorList>
    </citation>
    <scope>NUCLEOTIDE SEQUENCE [LARGE SCALE GENOMIC DNA]</scope>
    <source>
        <strain>AX4</strain>
    </source>
</reference>
<reference key="2">
    <citation type="journal article" date="2008" name="Langmuir">
        <title>Minimal F-actin cytoskeletal system for planar supported phospholipid bilayers.</title>
        <authorList>
            <person name="Barfoot R.J."/>
            <person name="Sheikh K.H."/>
            <person name="Johnson B.R."/>
            <person name="Colyer J."/>
            <person name="Miles R.E."/>
            <person name="Jeuken L.J."/>
            <person name="Bushby R.J."/>
            <person name="Evans S.D."/>
        </authorList>
    </citation>
    <scope>FUNCTION</scope>
</reference>
<accession>Q54GU3</accession>
<dbReference type="EMBL" id="AAFI02000149">
    <property type="protein sequence ID" value="EAL62472.1"/>
    <property type="molecule type" value="Genomic_DNA"/>
</dbReference>
<dbReference type="RefSeq" id="XP_635976.1">
    <property type="nucleotide sequence ID" value="XM_630884.1"/>
</dbReference>
<dbReference type="FunCoup" id="Q54GU3">
    <property type="interactions" value="641"/>
</dbReference>
<dbReference type="GlyCosmos" id="Q54GU3">
    <property type="glycosylation" value="5 sites, No reported glycans"/>
</dbReference>
<dbReference type="GlyGen" id="Q54GU3">
    <property type="glycosylation" value="5 sites"/>
</dbReference>
<dbReference type="PaxDb" id="44689-DDB0232304"/>
<dbReference type="EnsemblProtists" id="EAL62472">
    <property type="protein sequence ID" value="EAL62472"/>
    <property type="gene ID" value="DDB_G0289919"/>
</dbReference>
<dbReference type="GeneID" id="8627391"/>
<dbReference type="KEGG" id="ddi:DDB_G0289919"/>
<dbReference type="dictyBase" id="DDB_G0289919">
    <property type="gene designation" value="ponJ"/>
</dbReference>
<dbReference type="VEuPathDB" id="AmoebaDB:DDB_G0289919"/>
<dbReference type="eggNOG" id="ENOG502RI2M">
    <property type="taxonomic scope" value="Eukaryota"/>
</dbReference>
<dbReference type="HOGENOM" id="CLU_1186864_0_0_1"/>
<dbReference type="InParanoid" id="Q54GU3"/>
<dbReference type="OMA" id="YTTEDCT"/>
<dbReference type="PRO" id="PR:Q54GU3"/>
<dbReference type="Proteomes" id="UP000002195">
    <property type="component" value="Chromosome 5"/>
</dbReference>
<dbReference type="GO" id="GO:0005886">
    <property type="term" value="C:plasma membrane"/>
    <property type="evidence" value="ECO:0007669"/>
    <property type="project" value="UniProtKB-SubCell"/>
</dbReference>
<dbReference type="GO" id="GO:0098552">
    <property type="term" value="C:side of membrane"/>
    <property type="evidence" value="ECO:0007669"/>
    <property type="project" value="UniProtKB-KW"/>
</dbReference>
<dbReference type="GO" id="GO:0003779">
    <property type="term" value="F:actin binding"/>
    <property type="evidence" value="ECO:0007669"/>
    <property type="project" value="UniProtKB-KW"/>
</dbReference>
<feature type="signal peptide" evidence="1">
    <location>
        <begin position="1"/>
        <end position="20"/>
    </location>
</feature>
<feature type="chain" id="PRO_0000367835" description="Ponticulin-like protein J">
    <location>
        <begin position="21"/>
        <end position="212"/>
    </location>
</feature>
<feature type="propeptide" id="PRO_0000367836" description="Removed in mature form" evidence="1">
    <location>
        <begin position="213"/>
        <end position="234"/>
    </location>
</feature>
<feature type="region of interest" description="Disordered" evidence="2">
    <location>
        <begin position="115"/>
        <end position="213"/>
    </location>
</feature>
<feature type="compositionally biased region" description="Low complexity" evidence="2">
    <location>
        <begin position="154"/>
        <end position="195"/>
    </location>
</feature>
<feature type="lipid moiety-binding region" description="GPI-like-anchor amidated asparagine" evidence="1">
    <location>
        <position position="212"/>
    </location>
</feature>
<feature type="glycosylation site" description="N-linked (GlcNAc...) asparagine" evidence="1">
    <location>
        <position position="19"/>
    </location>
</feature>
<feature type="glycosylation site" description="N-linked (GlcNAc...) asparagine" evidence="1">
    <location>
        <position position="143"/>
    </location>
</feature>
<feature type="glycosylation site" description="N-linked (GlcNAc...) asparagine" evidence="1">
    <location>
        <position position="166"/>
    </location>
</feature>
<feature type="glycosylation site" description="N-linked (GlcNAc...) asparagine" evidence="1">
    <location>
        <position position="206"/>
    </location>
</feature>
<feature type="glycosylation site" description="N-linked (GlcNAc...) asparagine" evidence="1">
    <location>
        <position position="213"/>
    </location>
</feature>
<gene>
    <name type="primary">ponJ</name>
    <name type="ORF">DDB_G0289919</name>
</gene>